<dbReference type="EC" id="2.1.1.173" evidence="1"/>
<dbReference type="EC" id="2.1.1.264" evidence="1"/>
<dbReference type="EMBL" id="CP001144">
    <property type="protein sequence ID" value="ACH73982.1"/>
    <property type="molecule type" value="Genomic_DNA"/>
</dbReference>
<dbReference type="SMR" id="B5FQZ1"/>
<dbReference type="KEGG" id="sed:SeD_A1136"/>
<dbReference type="HOGENOM" id="CLU_014042_2_0_6"/>
<dbReference type="Proteomes" id="UP000008322">
    <property type="component" value="Chromosome"/>
</dbReference>
<dbReference type="GO" id="GO:0005737">
    <property type="term" value="C:cytoplasm"/>
    <property type="evidence" value="ECO:0007669"/>
    <property type="project" value="UniProtKB-SubCell"/>
</dbReference>
<dbReference type="GO" id="GO:0052915">
    <property type="term" value="F:23S rRNA (guanine(2445)-N(2))-methyltransferase activity"/>
    <property type="evidence" value="ECO:0007669"/>
    <property type="project" value="UniProtKB-UniRule"/>
</dbReference>
<dbReference type="GO" id="GO:0003723">
    <property type="term" value="F:RNA binding"/>
    <property type="evidence" value="ECO:0007669"/>
    <property type="project" value="UniProtKB-KW"/>
</dbReference>
<dbReference type="GO" id="GO:0070043">
    <property type="term" value="F:rRNA (guanine-N7-)-methyltransferase activity"/>
    <property type="evidence" value="ECO:0007669"/>
    <property type="project" value="UniProtKB-UniRule"/>
</dbReference>
<dbReference type="CDD" id="cd02440">
    <property type="entry name" value="AdoMet_MTases"/>
    <property type="match status" value="2"/>
</dbReference>
<dbReference type="CDD" id="cd11715">
    <property type="entry name" value="THUMP_AdoMetMT"/>
    <property type="match status" value="1"/>
</dbReference>
<dbReference type="FunFam" id="3.30.750.80:FF:000001">
    <property type="entry name" value="Ribosomal RNA large subunit methyltransferase K/L"/>
    <property type="match status" value="1"/>
</dbReference>
<dbReference type="FunFam" id="3.40.50.150:FF:000039">
    <property type="entry name" value="Ribosomal RNA large subunit methyltransferase K/L"/>
    <property type="match status" value="1"/>
</dbReference>
<dbReference type="Gene3D" id="3.30.2130.30">
    <property type="match status" value="1"/>
</dbReference>
<dbReference type="Gene3D" id="3.30.750.80">
    <property type="entry name" value="RNA methyltransferase domain (HRMD) like"/>
    <property type="match status" value="1"/>
</dbReference>
<dbReference type="Gene3D" id="3.40.50.150">
    <property type="entry name" value="Vaccinia Virus protein VP39"/>
    <property type="match status" value="2"/>
</dbReference>
<dbReference type="HAMAP" id="MF_01858">
    <property type="entry name" value="23SrRNA_methyltr_KL"/>
    <property type="match status" value="1"/>
</dbReference>
<dbReference type="InterPro" id="IPR017244">
    <property type="entry name" value="23SrRNA_methyltr_KL"/>
</dbReference>
<dbReference type="InterPro" id="IPR002052">
    <property type="entry name" value="DNA_methylase_N6_adenine_CS"/>
</dbReference>
<dbReference type="InterPro" id="IPR000241">
    <property type="entry name" value="RlmKL-like_Mtase"/>
</dbReference>
<dbReference type="InterPro" id="IPR053943">
    <property type="entry name" value="RlmKL-like_Mtase_CS"/>
</dbReference>
<dbReference type="InterPro" id="IPR054170">
    <property type="entry name" value="RlmL_1st"/>
</dbReference>
<dbReference type="InterPro" id="IPR019614">
    <property type="entry name" value="SAM-dep_methyl-trfase"/>
</dbReference>
<dbReference type="InterPro" id="IPR029063">
    <property type="entry name" value="SAM-dependent_MTases_sf"/>
</dbReference>
<dbReference type="InterPro" id="IPR004114">
    <property type="entry name" value="THUMP_dom"/>
</dbReference>
<dbReference type="NCBIfam" id="NF008748">
    <property type="entry name" value="PRK11783.1"/>
    <property type="match status" value="1"/>
</dbReference>
<dbReference type="PANTHER" id="PTHR47313">
    <property type="entry name" value="RIBOSOMAL RNA LARGE SUBUNIT METHYLTRANSFERASE K/L"/>
    <property type="match status" value="1"/>
</dbReference>
<dbReference type="PANTHER" id="PTHR47313:SF1">
    <property type="entry name" value="RIBOSOMAL RNA LARGE SUBUNIT METHYLTRANSFERASE K_L"/>
    <property type="match status" value="1"/>
</dbReference>
<dbReference type="Pfam" id="PF10672">
    <property type="entry name" value="Methyltrans_SAM"/>
    <property type="match status" value="1"/>
</dbReference>
<dbReference type="Pfam" id="PF22020">
    <property type="entry name" value="RlmL_1st"/>
    <property type="match status" value="1"/>
</dbReference>
<dbReference type="Pfam" id="PF02926">
    <property type="entry name" value="THUMP"/>
    <property type="match status" value="1"/>
</dbReference>
<dbReference type="Pfam" id="PF01170">
    <property type="entry name" value="UPF0020"/>
    <property type="match status" value="1"/>
</dbReference>
<dbReference type="PIRSF" id="PIRSF037618">
    <property type="entry name" value="RNA_Mtase_bacteria_prd"/>
    <property type="match status" value="1"/>
</dbReference>
<dbReference type="PRINTS" id="PR00507">
    <property type="entry name" value="N12N6MTFRASE"/>
</dbReference>
<dbReference type="SMART" id="SM00981">
    <property type="entry name" value="THUMP"/>
    <property type="match status" value="1"/>
</dbReference>
<dbReference type="SUPFAM" id="SSF53335">
    <property type="entry name" value="S-adenosyl-L-methionine-dependent methyltransferases"/>
    <property type="match status" value="2"/>
</dbReference>
<dbReference type="PROSITE" id="PS51165">
    <property type="entry name" value="THUMP"/>
    <property type="match status" value="1"/>
</dbReference>
<dbReference type="PROSITE" id="PS01261">
    <property type="entry name" value="UPF0020"/>
    <property type="match status" value="1"/>
</dbReference>
<protein>
    <recommendedName>
        <fullName evidence="1">Ribosomal RNA large subunit methyltransferase K/L</fullName>
    </recommendedName>
    <domain>
        <recommendedName>
            <fullName evidence="1">23S rRNA m2G2445 methyltransferase</fullName>
            <ecNumber evidence="1">2.1.1.173</ecNumber>
        </recommendedName>
        <alternativeName>
            <fullName evidence="1">rRNA (guanine-N(2)-)-methyltransferase RlmL</fullName>
        </alternativeName>
    </domain>
    <domain>
        <recommendedName>
            <fullName evidence="1">23S rRNA m7G2069 methyltransferase</fullName>
            <ecNumber evidence="1">2.1.1.264</ecNumber>
        </recommendedName>
        <alternativeName>
            <fullName evidence="1">rRNA (guanine-N(7)-)-methyltransferase RlmK</fullName>
        </alternativeName>
    </domain>
</protein>
<reference key="1">
    <citation type="journal article" date="2011" name="J. Bacteriol.">
        <title>Comparative genomics of 28 Salmonella enterica isolates: evidence for CRISPR-mediated adaptive sublineage evolution.</title>
        <authorList>
            <person name="Fricke W.F."/>
            <person name="Mammel M.K."/>
            <person name="McDermott P.F."/>
            <person name="Tartera C."/>
            <person name="White D.G."/>
            <person name="Leclerc J.E."/>
            <person name="Ravel J."/>
            <person name="Cebula T.A."/>
        </authorList>
    </citation>
    <scope>NUCLEOTIDE SEQUENCE [LARGE SCALE GENOMIC DNA]</scope>
    <source>
        <strain>CT_02021853</strain>
    </source>
</reference>
<accession>B5FQZ1</accession>
<name>RLMKL_SALDC</name>
<sequence length="702" mass="78849">MNSLFASTARGLEELLKTELEKLGAVGCQVVQGGVHFQGDTRLIYQSLMWSRLASRIILPMGECKVYSDLDLYLGVQAINWTEIFNPGATFAVHFSGLNDTIRNSQYGAMKVKDAIVDAFTRKNLPRPNVDRESPDLRINVWLNKETASIALDLSGDGLHLRGYRDRTGLAPIKETLAAAIVMRSGWQPGTPLLDPMCGSGTLLIEAAMWATDRAPGLHRGHWGFSGWAQHDETIWQEVKAEAQTRARKGLAEYSSHFYGSDSDARVIERARSNARRAGIGELITFEVKDVAQLSNPLPKGPYGTVISNPPYGERLDSEPALIALHSLLGRTMKNQFGGWNLSLFSASPDLLGSLQLRADKQFKAKNGPLDCVQKNYHIAETTADSKPATVAEDYANRLRKNLKKLEKWARQEGIECYRLYDADLPEYNVAVDRYGDWAVIQEYAPPKTVDAQKARQRLFDIIAATLSVLGIPPNKLVLKTRERQKGKNQYQKMSEKGEFLEVSEYNARLWVNLTDYLDTGLFLDHRIARRMLGEMSKGKDFLNLFSYTGSASVHAGLGGARSTTTVDMSRTYLEWAERNLRLNGLSGRAHRLIQADCLGWLREANEQFDLIFIDPPTFSNSKRMEESFDVQRDHVALMKDLKRLLRKGGTIMFSNNKRGFRMDLEGLAELGLTAQEITQKTLSPDFARNRQIHNCWLIRAA</sequence>
<evidence type="ECO:0000255" key="1">
    <source>
        <dbReference type="HAMAP-Rule" id="MF_01858"/>
    </source>
</evidence>
<organism>
    <name type="scientific">Salmonella dublin (strain CT_02021853)</name>
    <dbReference type="NCBI Taxonomy" id="439851"/>
    <lineage>
        <taxon>Bacteria</taxon>
        <taxon>Pseudomonadati</taxon>
        <taxon>Pseudomonadota</taxon>
        <taxon>Gammaproteobacteria</taxon>
        <taxon>Enterobacterales</taxon>
        <taxon>Enterobacteriaceae</taxon>
        <taxon>Salmonella</taxon>
    </lineage>
</organism>
<comment type="function">
    <text evidence="1">Specifically methylates the guanine in position 2445 (m2G2445) and the guanine in position 2069 (m7G2069) of 23S rRNA.</text>
</comment>
<comment type="catalytic activity">
    <reaction evidence="1">
        <text>guanosine(2445) in 23S rRNA + S-adenosyl-L-methionine = N(2)-methylguanosine(2445) in 23S rRNA + S-adenosyl-L-homocysteine + H(+)</text>
        <dbReference type="Rhea" id="RHEA:42740"/>
        <dbReference type="Rhea" id="RHEA-COMP:10215"/>
        <dbReference type="Rhea" id="RHEA-COMP:10216"/>
        <dbReference type="ChEBI" id="CHEBI:15378"/>
        <dbReference type="ChEBI" id="CHEBI:57856"/>
        <dbReference type="ChEBI" id="CHEBI:59789"/>
        <dbReference type="ChEBI" id="CHEBI:74269"/>
        <dbReference type="ChEBI" id="CHEBI:74481"/>
        <dbReference type="EC" id="2.1.1.173"/>
    </reaction>
</comment>
<comment type="catalytic activity">
    <reaction evidence="1">
        <text>guanosine(2069) in 23S rRNA + S-adenosyl-L-methionine = N(2)-methylguanosine(2069) in 23S rRNA + S-adenosyl-L-homocysteine + H(+)</text>
        <dbReference type="Rhea" id="RHEA:43772"/>
        <dbReference type="Rhea" id="RHEA-COMP:10688"/>
        <dbReference type="Rhea" id="RHEA-COMP:10689"/>
        <dbReference type="ChEBI" id="CHEBI:15378"/>
        <dbReference type="ChEBI" id="CHEBI:57856"/>
        <dbReference type="ChEBI" id="CHEBI:59789"/>
        <dbReference type="ChEBI" id="CHEBI:74269"/>
        <dbReference type="ChEBI" id="CHEBI:74481"/>
        <dbReference type="EC" id="2.1.1.264"/>
    </reaction>
</comment>
<comment type="subcellular location">
    <subcellularLocation>
        <location evidence="1">Cytoplasm</location>
    </subcellularLocation>
</comment>
<comment type="similarity">
    <text evidence="1">Belongs to the methyltransferase superfamily. RlmKL family.</text>
</comment>
<keyword id="KW-0963">Cytoplasm</keyword>
<keyword id="KW-0489">Methyltransferase</keyword>
<keyword id="KW-0694">RNA-binding</keyword>
<keyword id="KW-0698">rRNA processing</keyword>
<keyword id="KW-0949">S-adenosyl-L-methionine</keyword>
<keyword id="KW-0808">Transferase</keyword>
<feature type="chain" id="PRO_0000366807" description="Ribosomal RNA large subunit methyltransferase K/L">
    <location>
        <begin position="1"/>
        <end position="702"/>
    </location>
</feature>
<feature type="domain" description="THUMP" evidence="1">
    <location>
        <begin position="43"/>
        <end position="154"/>
    </location>
</feature>
<gene>
    <name evidence="1" type="primary">rlmL</name>
    <name type="ordered locus">SeD_A1136</name>
</gene>
<proteinExistence type="inferred from homology"/>